<accession>A0A4P8DJF6</accession>
<protein>
    <recommendedName>
        <fullName evidence="4">FAD-dependent monooxygenase dmxR9</fullName>
        <shortName evidence="4">FMO dmxR9</shortName>
        <ecNumber evidence="6">1.-.-.-</ecNumber>
    </recommendedName>
    <alternativeName>
        <fullName evidence="4">Dimeric xanthone biosynthesis cluster protein R9</fullName>
    </alternativeName>
</protein>
<keyword id="KW-0274">FAD</keyword>
<keyword id="KW-0285">Flavoprotein</keyword>
<keyword id="KW-0503">Monooxygenase</keyword>
<keyword id="KW-0560">Oxidoreductase</keyword>
<dbReference type="EC" id="1.-.-.-" evidence="6"/>
<dbReference type="EMBL" id="MK182094">
    <property type="protein sequence ID" value="QCL09100.1"/>
    <property type="molecule type" value="Genomic_DNA"/>
</dbReference>
<dbReference type="SMR" id="A0A4P8DJF6"/>
<dbReference type="GO" id="GO:0071949">
    <property type="term" value="F:FAD binding"/>
    <property type="evidence" value="ECO:0007669"/>
    <property type="project" value="InterPro"/>
</dbReference>
<dbReference type="GO" id="GO:0004497">
    <property type="term" value="F:monooxygenase activity"/>
    <property type="evidence" value="ECO:0007669"/>
    <property type="project" value="UniProtKB-KW"/>
</dbReference>
<dbReference type="Gene3D" id="3.50.50.60">
    <property type="entry name" value="FAD/NAD(P)-binding domain"/>
    <property type="match status" value="1"/>
</dbReference>
<dbReference type="InterPro" id="IPR002938">
    <property type="entry name" value="FAD-bd"/>
</dbReference>
<dbReference type="InterPro" id="IPR050493">
    <property type="entry name" value="FAD-dep_Monooxygenase_BioMet"/>
</dbReference>
<dbReference type="InterPro" id="IPR036188">
    <property type="entry name" value="FAD/NAD-bd_sf"/>
</dbReference>
<dbReference type="PANTHER" id="PTHR13789:SF315">
    <property type="entry name" value="FAD-DEPENDENT MONOOXYGENASE MDPD"/>
    <property type="match status" value="1"/>
</dbReference>
<dbReference type="PANTHER" id="PTHR13789">
    <property type="entry name" value="MONOOXYGENASE"/>
    <property type="match status" value="1"/>
</dbReference>
<dbReference type="Pfam" id="PF01494">
    <property type="entry name" value="FAD_binding_3"/>
    <property type="match status" value="1"/>
</dbReference>
<dbReference type="PRINTS" id="PR00420">
    <property type="entry name" value="RNGMNOXGNASE"/>
</dbReference>
<dbReference type="SUPFAM" id="SSF51905">
    <property type="entry name" value="FAD/NAD(P)-binding domain"/>
    <property type="match status" value="1"/>
</dbReference>
<sequence>MAPSTIGTNVAGDKYEYDPENWMAKGTSTLNNGNGTKGTLDVDLPERHPETGINVLVVGAGMGGLMTTLECWRKGHNIVGILERNDGPVYSGDIIVIQPSAVSVLRHWPDMMRDMEDEQVNAAVSYEQHTGRHIYGPTVPSFNELEHLASRKGPFVAPAQIREKFYRMLLRQVAKLGFKVQYGKRAVSYFEDIAAGKGGVVLESGEIQVADVVVAADGLRSTSEILIAGEHTPTKSSGMSIYRTAYPREMAMKDETVRKRWADTKEIWEYWLGPGMYIGVFFSEDVVSWGFTPRDTHGGATESWEPDTDPEDVVKELLRVPDWDPAIAALVRTAPKGAIVHWPLLWRNLRREWTSSGGHVVQLGDSAHSFVPTSGNGATQALEDAITLATCLQLGGAARNAPLATKIYNLLRYERVSCAQKMSFVNSQLKTETDWDGIWADPIKVRTRFPKWIHNHDPEDYAYAKYGQAFAHLVAGADFANENFPPGHHFVPWSIEEVYADIEAGKKVEALLDGDWS</sequence>
<name>DMXR9_CRYX8</name>
<proteinExistence type="inferred from homology"/>
<feature type="chain" id="PRO_0000453480" description="FAD-dependent monooxygenase dmxR9">
    <location>
        <begin position="1"/>
        <end position="517"/>
    </location>
</feature>
<feature type="active site" evidence="2">
    <location>
        <position position="243"/>
    </location>
</feature>
<feature type="active site" evidence="1">
    <location>
        <position position="270"/>
    </location>
</feature>
<feature type="binding site" evidence="1">
    <location>
        <position position="96"/>
    </location>
    <ligand>
        <name>FAD</name>
        <dbReference type="ChEBI" id="CHEBI:57692"/>
    </ligand>
</feature>
<feature type="binding site" evidence="1">
    <location>
        <position position="162"/>
    </location>
    <ligand>
        <name>FAD</name>
        <dbReference type="ChEBI" id="CHEBI:57692"/>
    </ligand>
</feature>
<feature type="binding site" evidence="1">
    <location>
        <position position="365"/>
    </location>
    <ligand>
        <name>FAD</name>
        <dbReference type="ChEBI" id="CHEBI:57692"/>
    </ligand>
</feature>
<feature type="binding site" evidence="1">
    <location>
        <position position="378"/>
    </location>
    <ligand>
        <name>FAD</name>
        <dbReference type="ChEBI" id="CHEBI:57692"/>
    </ligand>
</feature>
<evidence type="ECO:0000250" key="1">
    <source>
        <dbReference type="UniProtKB" id="B8M9J8"/>
    </source>
</evidence>
<evidence type="ECO:0000250" key="2">
    <source>
        <dbReference type="UniProtKB" id="L0E4H0"/>
    </source>
</evidence>
<evidence type="ECO:0000269" key="3">
    <source>
    </source>
</evidence>
<evidence type="ECO:0000303" key="4">
    <source>
    </source>
</evidence>
<evidence type="ECO:0000305" key="5"/>
<evidence type="ECO:0000305" key="6">
    <source>
    </source>
</evidence>
<comment type="function">
    <text evidence="3 6">FAD-dependent monooxygenase; part of the gene cluster that mediates the biosynthesis of the dimeric xanthones cryptosporioptides (PubMed:30996871). The pathway begins with the synthesis of atrochrysone thioester by the polyketide synthase dmx-nrPKS (Probable). The atrochrysone carboxyl ACP thioesterase dmxR1 then breaks the thioester bond and releases the atrochrysone carboxylic acid from dmx-nrPKS (Probable). Atrochrysone carboxylic acid is decarboxylated by the decarboxylase dmxR15, and oxidized by the anthrone oxygenase dmxR16 to yield emodin (Probable). Emodin is then reduced to emodin hydroquinone by the oxidoreductase dmxR7 (Probable). A-ring reduction by the short chain dehydrogenase dmxR18, dehydration by the scytalone dehydratase-like protein dmxR17 and probable spontaneous re-oxidation, results in overall deoxygenation to chrysophanol (PubMed:30996871). Baeyer-Villiger oxidation by the Baeyer-Villiger monooxygenase (BVMO) dmxR6 then yields monodictylactone in equilibrium with monodictyphenone (PubMed:30996871). In the case of the cryptosporioptides biosynthesis, monodictylactone is reduced at C-12 to an alcohol (by the short chain dehydrogenases dmxR12 or dmxR8) and hydroxylated at C-5 by dmxR9, yielding the electron-rich aromatic which could eliminate H(2)O to form the ortho-quinonemethide, followed by tautomerisation to paraquinone and complete the formal reduction to produce the 10-methylgroup (Probable). Conjugate addition of C-4a-OH to the resulting paraquinone by the monooxygenase dmxR10 then gives cyclohexadienone, which is then reduced at C-5 by the short chain dehydrogenase dmxR3 to give the dihydroxanthone (Probable). The 6,7-epoxide in the cryptosporioptides could be introduced by the cytochrome P450 monooxygenase dmxL3 (Probable). The highly reducing PKS dmxL2 manufactures butyrate, which is further carboxylated by dmxL1 to form ethylmalonate (PubMed:30996871). It is not yet clear whether the carboxylation occurs while the butyrate is attached to the ACP of dmxL2, but this unusual fungal metabolite could then be esterified to O-5 by the O-acetyltransferase dmxR13 (PubMed:30996871). Finally, dimerization performed by dmxR5 gives the observed dimers cryptosporioptides A, B and C as the final products of the pathway (PubMed:30996871).</text>
</comment>
<comment type="cofactor">
    <cofactor evidence="5">
        <name>FAD</name>
        <dbReference type="ChEBI" id="CHEBI:57692"/>
    </cofactor>
</comment>
<comment type="pathway">
    <text evidence="6">Secondary metabolite biosynthesis.</text>
</comment>
<comment type="similarity">
    <text evidence="5">Belongs to the paxM FAD-dependent monooxygenase family.</text>
</comment>
<reference key="1">
    <citation type="journal article" date="2019" name="Chem. Sci.">
        <title>Structure revision of cryptosporioptides and determination of the genetic basis for dimeric xanthone biosynthesis in fungi.</title>
        <authorList>
            <person name="Greco C."/>
            <person name="de Mattos-Shipley K."/>
            <person name="Bailey A.M."/>
            <person name="Mulholland N.P."/>
            <person name="Vincent J.L."/>
            <person name="Willis C.L."/>
            <person name="Cox R.J."/>
            <person name="Simpson T.J."/>
        </authorList>
    </citation>
    <scope>NUCLEOTIDE SEQUENCE [GENOMIC DNA]</scope>
    <scope>FUNCTION</scope>
    <scope>PATHWAY</scope>
    <source>
        <strain>8999</strain>
    </source>
</reference>
<organism>
    <name type="scientific">Cryptosporiopsis sp. (strain 8999)</name>
    <dbReference type="NCBI Taxonomy" id="2572248"/>
    <lineage>
        <taxon>Eukaryota</taxon>
        <taxon>Fungi</taxon>
        <taxon>Dikarya</taxon>
        <taxon>Ascomycota</taxon>
        <taxon>Pezizomycotina</taxon>
        <taxon>Leotiomycetes</taxon>
        <taxon>Helotiales</taxon>
        <taxon>Dermateaceae</taxon>
        <taxon>Cryptosporiopsis</taxon>
    </lineage>
</organism>
<gene>
    <name evidence="4" type="primary">dmxR9</name>
</gene>